<proteinExistence type="inferred from homology"/>
<comment type="function">
    <text evidence="1">Involved in the efflux of sugars. The physiological role may be the reduction of the intracellular concentration of toxic sugars or sugar metabolites.</text>
</comment>
<comment type="subcellular location">
    <subcellularLocation>
        <location evidence="1">Cell inner membrane</location>
        <topology evidence="1">Multi-pass membrane protein</topology>
    </subcellularLocation>
</comment>
<comment type="similarity">
    <text evidence="1">Belongs to the major facilitator superfamily. SotB (TC 2.A.1.2) family.</text>
</comment>
<reference key="1">
    <citation type="journal article" date="2005" name="J. Bacteriol.">
        <title>Genomic sequence of an otitis media isolate of nontypeable Haemophilus influenzae: comparative study with H. influenzae serotype d, strain KW20.</title>
        <authorList>
            <person name="Harrison A."/>
            <person name="Dyer D.W."/>
            <person name="Gillaspy A."/>
            <person name="Ray W.C."/>
            <person name="Mungur R."/>
            <person name="Carson M.B."/>
            <person name="Zhong H."/>
            <person name="Gipson J."/>
            <person name="Gipson M."/>
            <person name="Johnson L.S."/>
            <person name="Lewis L."/>
            <person name="Bakaletz L.O."/>
            <person name="Munson R.S. Jr."/>
        </authorList>
    </citation>
    <scope>NUCLEOTIDE SEQUENCE [LARGE SCALE GENOMIC DNA]</scope>
    <source>
        <strain>86-028NP</strain>
    </source>
</reference>
<gene>
    <name evidence="1" type="primary">sotB</name>
    <name type="ordered locus">NTHI0221</name>
</gene>
<sequence length="402" mass="43998">MSLYLKAEKIQSWRVLIMACAGFIFNTTEFVPVAMLSDIAQSFDMQTADTGLMMTVYAWTVLIMSLPAMLATGNMERKSLLIKLFIIFIVGHILLVIAWNFWILLLARMCIALAHSVFWSITASLVMRISPKHKKTQALGMLAIGTALATILGLPIGRIVGQLVGWRVTFGIIAVLALSIMFLIIRLLPNLPSKNAGSIASLPLLAKRPLLLWLYVTTAIVISAHFTAYTYIEPFMIDVGHLDPNFATAVLLVFGFSGIAASLLFNRLYRFAPTKFIVVSMSLLMFSLLLLLFSTEAIIAMFSLVFIWGIGISCIGLSLQMRVLKLAPDATDVATAIYSGIFNAGIGAGALFGNLATTYLGLNEIGYTGAALGLIGFIIFITTHLKYRHTFLLQNNKKITAL</sequence>
<evidence type="ECO:0000255" key="1">
    <source>
        <dbReference type="HAMAP-Rule" id="MF_00517"/>
    </source>
</evidence>
<accession>Q4QP52</accession>
<keyword id="KW-0997">Cell inner membrane</keyword>
<keyword id="KW-1003">Cell membrane</keyword>
<keyword id="KW-0472">Membrane</keyword>
<keyword id="KW-0762">Sugar transport</keyword>
<keyword id="KW-0812">Transmembrane</keyword>
<keyword id="KW-1133">Transmembrane helix</keyword>
<keyword id="KW-0813">Transport</keyword>
<feature type="chain" id="PRO_0000259250" description="Probable sugar efflux transporter">
    <location>
        <begin position="1"/>
        <end position="402"/>
    </location>
</feature>
<feature type="transmembrane region" description="Helical" evidence="1">
    <location>
        <begin position="15"/>
        <end position="35"/>
    </location>
</feature>
<feature type="transmembrane region" description="Helical" evidence="1">
    <location>
        <begin position="51"/>
        <end position="71"/>
    </location>
</feature>
<feature type="transmembrane region" description="Helical" evidence="1">
    <location>
        <begin position="84"/>
        <end position="104"/>
    </location>
</feature>
<feature type="transmembrane region" description="Helical" evidence="1">
    <location>
        <begin position="109"/>
        <end position="129"/>
    </location>
</feature>
<feature type="transmembrane region" description="Helical" evidence="1">
    <location>
        <begin position="137"/>
        <end position="157"/>
    </location>
</feature>
<feature type="transmembrane region" description="Helical" evidence="1">
    <location>
        <begin position="168"/>
        <end position="188"/>
    </location>
</feature>
<feature type="transmembrane region" description="Helical" evidence="1">
    <location>
        <begin position="209"/>
        <end position="229"/>
    </location>
</feature>
<feature type="transmembrane region" description="Helical" evidence="1">
    <location>
        <begin position="245"/>
        <end position="265"/>
    </location>
</feature>
<feature type="transmembrane region" description="Helical" evidence="1">
    <location>
        <begin position="276"/>
        <end position="296"/>
    </location>
</feature>
<feature type="transmembrane region" description="Helical" evidence="1">
    <location>
        <begin position="297"/>
        <end position="317"/>
    </location>
</feature>
<feature type="transmembrane region" description="Helical" evidence="1">
    <location>
        <begin position="333"/>
        <end position="353"/>
    </location>
</feature>
<feature type="transmembrane region" description="Helical" evidence="1">
    <location>
        <begin position="365"/>
        <end position="385"/>
    </location>
</feature>
<organism>
    <name type="scientific">Haemophilus influenzae (strain 86-028NP)</name>
    <dbReference type="NCBI Taxonomy" id="281310"/>
    <lineage>
        <taxon>Bacteria</taxon>
        <taxon>Pseudomonadati</taxon>
        <taxon>Pseudomonadota</taxon>
        <taxon>Gammaproteobacteria</taxon>
        <taxon>Pasteurellales</taxon>
        <taxon>Pasteurellaceae</taxon>
        <taxon>Haemophilus</taxon>
    </lineage>
</organism>
<protein>
    <recommendedName>
        <fullName evidence="1">Probable sugar efflux transporter</fullName>
    </recommendedName>
</protein>
<name>SOTB_HAEI8</name>
<dbReference type="EMBL" id="CP000057">
    <property type="protein sequence ID" value="AAX87195.1"/>
    <property type="molecule type" value="Genomic_DNA"/>
</dbReference>
<dbReference type="RefSeq" id="WP_011271896.1">
    <property type="nucleotide sequence ID" value="NC_007146.2"/>
</dbReference>
<dbReference type="SMR" id="Q4QP52"/>
<dbReference type="KEGG" id="hit:NTHI0221"/>
<dbReference type="HOGENOM" id="CLU_001265_61_1_6"/>
<dbReference type="Proteomes" id="UP000002525">
    <property type="component" value="Chromosome"/>
</dbReference>
<dbReference type="GO" id="GO:0005886">
    <property type="term" value="C:plasma membrane"/>
    <property type="evidence" value="ECO:0007669"/>
    <property type="project" value="UniProtKB-SubCell"/>
</dbReference>
<dbReference type="GO" id="GO:0015144">
    <property type="term" value="F:carbohydrate transmembrane transporter activity"/>
    <property type="evidence" value="ECO:0007669"/>
    <property type="project" value="UniProtKB-UniRule"/>
</dbReference>
<dbReference type="CDD" id="cd17324">
    <property type="entry name" value="MFS_NepI_like"/>
    <property type="match status" value="1"/>
</dbReference>
<dbReference type="Gene3D" id="1.20.1250.20">
    <property type="entry name" value="MFS general substrate transporter like domains"/>
    <property type="match status" value="1"/>
</dbReference>
<dbReference type="HAMAP" id="MF_00517">
    <property type="entry name" value="MFS_SotB"/>
    <property type="match status" value="1"/>
</dbReference>
<dbReference type="InterPro" id="IPR011701">
    <property type="entry name" value="MFS"/>
</dbReference>
<dbReference type="InterPro" id="IPR020846">
    <property type="entry name" value="MFS_dom"/>
</dbReference>
<dbReference type="InterPro" id="IPR050189">
    <property type="entry name" value="MFS_Efflux_Transporters"/>
</dbReference>
<dbReference type="InterPro" id="IPR036259">
    <property type="entry name" value="MFS_trans_sf"/>
</dbReference>
<dbReference type="InterPro" id="IPR023495">
    <property type="entry name" value="Sugar_effux_transptr_put"/>
</dbReference>
<dbReference type="NCBIfam" id="NF002921">
    <property type="entry name" value="PRK03545.1"/>
    <property type="match status" value="1"/>
</dbReference>
<dbReference type="PANTHER" id="PTHR43124">
    <property type="entry name" value="PURINE EFFLUX PUMP PBUE"/>
    <property type="match status" value="1"/>
</dbReference>
<dbReference type="PANTHER" id="PTHR43124:SF4">
    <property type="entry name" value="SUGAR EFFLUX TRANSPORTER"/>
    <property type="match status" value="1"/>
</dbReference>
<dbReference type="Pfam" id="PF07690">
    <property type="entry name" value="MFS_1"/>
    <property type="match status" value="1"/>
</dbReference>
<dbReference type="SUPFAM" id="SSF103473">
    <property type="entry name" value="MFS general substrate transporter"/>
    <property type="match status" value="1"/>
</dbReference>
<dbReference type="PROSITE" id="PS50850">
    <property type="entry name" value="MFS"/>
    <property type="match status" value="1"/>
</dbReference>